<name>PRAF3_BOVIN</name>
<gene>
    <name type="primary">ARL6IP5</name>
    <name type="synonym">PRAF3</name>
</gene>
<organism>
    <name type="scientific">Bos taurus</name>
    <name type="common">Bovine</name>
    <dbReference type="NCBI Taxonomy" id="9913"/>
    <lineage>
        <taxon>Eukaryota</taxon>
        <taxon>Metazoa</taxon>
        <taxon>Chordata</taxon>
        <taxon>Craniata</taxon>
        <taxon>Vertebrata</taxon>
        <taxon>Euteleostomi</taxon>
        <taxon>Mammalia</taxon>
        <taxon>Eutheria</taxon>
        <taxon>Laurasiatheria</taxon>
        <taxon>Artiodactyla</taxon>
        <taxon>Ruminantia</taxon>
        <taxon>Pecora</taxon>
        <taxon>Bovidae</taxon>
        <taxon>Bovinae</taxon>
        <taxon>Bos</taxon>
    </lineage>
</organism>
<proteinExistence type="evidence at transcript level"/>
<evidence type="ECO:0000250" key="1"/>
<evidence type="ECO:0000250" key="2">
    <source>
        <dbReference type="UniProtKB" id="O75915"/>
    </source>
</evidence>
<evidence type="ECO:0000250" key="3">
    <source>
        <dbReference type="UniProtKB" id="Q8R5J9"/>
    </source>
</evidence>
<evidence type="ECO:0000250" key="4">
    <source>
        <dbReference type="UniProtKB" id="Q9ES40"/>
    </source>
</evidence>
<evidence type="ECO:0000255" key="5"/>
<evidence type="ECO:0000305" key="6"/>
<comment type="function">
    <text evidence="3 4">Regulates intracellular concentrations of taurine and glutamate. Negatively modulates SLC1A1/EAAC1 glutamate transport activity by decreasing its affinity for glutamate in a PKC activity-dependent manner. Plays a role in the retention of SLC1A1/EAAC1 in the endoplasmic reticulum.</text>
</comment>
<comment type="subunit">
    <text evidence="3 4">Homodimer. Heterodimer with ARL6IP1. Forms multimers. Interacts with ARL6. Interacts with prenylated RAB1A and RAB3A. Interacts with SLC1A1/EAAC1. Interacts with RTN2 (via first transmembrane domain). Does not interact with VAMP1, VAMP2 or VAMP3.</text>
</comment>
<comment type="subcellular location">
    <subcellularLocation>
        <location evidence="4">Endoplasmic reticulum membrane</location>
        <topology evidence="5">Multi-pass membrane protein</topology>
    </subcellularLocation>
    <subcellularLocation>
        <location evidence="4">Cell membrane</location>
        <topology evidence="5">Multi-pass membrane protein</topology>
    </subcellularLocation>
    <subcellularLocation>
        <location evidence="4">Cytoplasm</location>
    </subcellularLocation>
    <subcellularLocation>
        <location evidence="4">Cytoplasm</location>
        <location evidence="4">Cytoskeleton</location>
    </subcellularLocation>
    <text evidence="4">Also exists as a soluble form in the cytoplasm. Associated with microtubules.</text>
</comment>
<comment type="similarity">
    <text evidence="6">Belongs to the PRA1 family.</text>
</comment>
<feature type="chain" id="PRO_0000256847" description="PRA1 family protein 3">
    <location>
        <begin position="1"/>
        <end position="188"/>
    </location>
</feature>
<feature type="topological domain" description="Cytoplasmic" evidence="1">
    <location>
        <begin position="1"/>
        <end position="35"/>
    </location>
</feature>
<feature type="transmembrane region" description="Helical" evidence="5">
    <location>
        <begin position="36"/>
        <end position="56"/>
    </location>
</feature>
<feature type="transmembrane region" description="Helical" evidence="5">
    <location>
        <begin position="57"/>
        <end position="77"/>
    </location>
</feature>
<feature type="topological domain" description="Cytoplasmic" evidence="1">
    <location>
        <begin position="78"/>
        <end position="93"/>
    </location>
</feature>
<feature type="transmembrane region" description="Helical" evidence="5">
    <location>
        <begin position="94"/>
        <end position="114"/>
    </location>
</feature>
<feature type="transmembrane region" description="Helical" evidence="5">
    <location>
        <begin position="115"/>
        <end position="135"/>
    </location>
</feature>
<feature type="topological domain" description="Cytoplasmic" evidence="1">
    <location>
        <begin position="136"/>
        <end position="188"/>
    </location>
</feature>
<feature type="region of interest" description="Required for homodimer formation and heterodimer formation with ARL6IP1" evidence="3">
    <location>
        <begin position="103"/>
        <end position="117"/>
    </location>
</feature>
<feature type="region of interest" description="Targeting to endoplasmic reticulum membrane" evidence="4">
    <location>
        <begin position="136"/>
        <end position="188"/>
    </location>
</feature>
<feature type="modified residue" description="N-acetylmethionine" evidence="2">
    <location>
        <position position="1"/>
    </location>
</feature>
<sequence>MDVNIAPLRAWDDFFPGSDRFARPDFRDISKWNNRVVSNLLYYQTNYLVVAAMMISVVGFLSPFNMILGGIVVVLVFTGFVWAAHNKDILRRMKKQYPTAFVMVVMLASYFLISLFGGVMVFVFGITFPLLLMFIHASLRLRNLKNKLENKMEEIGLKRTPMGIVLDALEQQEETITKFSDYISKMKE</sequence>
<dbReference type="EMBL" id="BT020899">
    <property type="protein sequence ID" value="AAX08916.1"/>
    <property type="molecule type" value="mRNA"/>
</dbReference>
<dbReference type="EMBL" id="BC102757">
    <property type="protein sequence ID" value="AAI02758.1"/>
    <property type="molecule type" value="mRNA"/>
</dbReference>
<dbReference type="RefSeq" id="NP_001014891.1">
    <property type="nucleotide sequence ID" value="NM_001014891.1"/>
</dbReference>
<dbReference type="SMR" id="Q5E9M1"/>
<dbReference type="FunCoup" id="Q5E9M1">
    <property type="interactions" value="2213"/>
</dbReference>
<dbReference type="STRING" id="9913.ENSBTAP00000028661"/>
<dbReference type="PaxDb" id="9913-ENSBTAP00000028661"/>
<dbReference type="PeptideAtlas" id="Q5E9M1"/>
<dbReference type="Ensembl" id="ENSBTAT00000028661.2">
    <property type="protein sequence ID" value="ENSBTAP00000028661.1"/>
    <property type="gene ID" value="ENSBTAG00000021506.3"/>
</dbReference>
<dbReference type="GeneID" id="509977"/>
<dbReference type="KEGG" id="bta:509977"/>
<dbReference type="CTD" id="10550"/>
<dbReference type="VEuPathDB" id="HostDB:ENSBTAG00000021506"/>
<dbReference type="VGNC" id="VGNC:26151">
    <property type="gene designation" value="ARL6IP5"/>
</dbReference>
<dbReference type="eggNOG" id="KOG4050">
    <property type="taxonomic scope" value="Eukaryota"/>
</dbReference>
<dbReference type="GeneTree" id="ENSGT00390000008631"/>
<dbReference type="HOGENOM" id="CLU_097683_0_0_1"/>
<dbReference type="InParanoid" id="Q5E9M1"/>
<dbReference type="OMA" id="KPWDDFF"/>
<dbReference type="OrthoDB" id="18213at2759"/>
<dbReference type="TreeFam" id="TF105479"/>
<dbReference type="Reactome" id="R-BTA-210500">
    <property type="pathway name" value="Glutamate Neurotransmitter Release Cycle"/>
</dbReference>
<dbReference type="Proteomes" id="UP000009136">
    <property type="component" value="Chromosome 22"/>
</dbReference>
<dbReference type="Bgee" id="ENSBTAG00000021506">
    <property type="expression patterns" value="Expressed in cardiac atrium and 104 other cell types or tissues"/>
</dbReference>
<dbReference type="GO" id="GO:0005856">
    <property type="term" value="C:cytoskeleton"/>
    <property type="evidence" value="ECO:0007669"/>
    <property type="project" value="UniProtKB-SubCell"/>
</dbReference>
<dbReference type="GO" id="GO:0005789">
    <property type="term" value="C:endoplasmic reticulum membrane"/>
    <property type="evidence" value="ECO:0007669"/>
    <property type="project" value="UniProtKB-SubCell"/>
</dbReference>
<dbReference type="GO" id="GO:0016020">
    <property type="term" value="C:membrane"/>
    <property type="evidence" value="ECO:0000318"/>
    <property type="project" value="GO_Central"/>
</dbReference>
<dbReference type="GO" id="GO:0005886">
    <property type="term" value="C:plasma membrane"/>
    <property type="evidence" value="ECO:0007669"/>
    <property type="project" value="UniProtKB-SubCell"/>
</dbReference>
<dbReference type="GO" id="GO:0099523">
    <property type="term" value="C:presynaptic cytosol"/>
    <property type="evidence" value="ECO:0007669"/>
    <property type="project" value="Ensembl"/>
</dbReference>
<dbReference type="GO" id="GO:0034599">
    <property type="term" value="P:cellular response to oxidative stress"/>
    <property type="evidence" value="ECO:0007669"/>
    <property type="project" value="Ensembl"/>
</dbReference>
<dbReference type="GO" id="GO:0006749">
    <property type="term" value="P:glutathione metabolic process"/>
    <property type="evidence" value="ECO:0007669"/>
    <property type="project" value="Ensembl"/>
</dbReference>
<dbReference type="GO" id="GO:0008631">
    <property type="term" value="P:intrinsic apoptotic signaling pathway in response to oxidative stress"/>
    <property type="evidence" value="ECO:0007669"/>
    <property type="project" value="Ensembl"/>
</dbReference>
<dbReference type="GO" id="GO:0098712">
    <property type="term" value="P:L-glutamate import across plasma membrane"/>
    <property type="evidence" value="ECO:0007669"/>
    <property type="project" value="Ensembl"/>
</dbReference>
<dbReference type="GO" id="GO:0015813">
    <property type="term" value="P:L-glutamate transmembrane transport"/>
    <property type="evidence" value="ECO:0000250"/>
    <property type="project" value="AgBase"/>
</dbReference>
<dbReference type="GO" id="GO:0007611">
    <property type="term" value="P:learning or memory"/>
    <property type="evidence" value="ECO:0007669"/>
    <property type="project" value="Ensembl"/>
</dbReference>
<dbReference type="GO" id="GO:0002037">
    <property type="term" value="P:negative regulation of L-glutamate import across plasma membrane"/>
    <property type="evidence" value="ECO:0000250"/>
    <property type="project" value="UniProtKB"/>
</dbReference>
<dbReference type="GO" id="GO:0010917">
    <property type="term" value="P:negative regulation of mitochondrial membrane potential"/>
    <property type="evidence" value="ECO:0007669"/>
    <property type="project" value="Ensembl"/>
</dbReference>
<dbReference type="GO" id="GO:0051051">
    <property type="term" value="P:negative regulation of transport"/>
    <property type="evidence" value="ECO:0000318"/>
    <property type="project" value="GO_Central"/>
</dbReference>
<dbReference type="GO" id="GO:0043065">
    <property type="term" value="P:positive regulation of apoptotic process"/>
    <property type="evidence" value="ECO:0007669"/>
    <property type="project" value="Ensembl"/>
</dbReference>
<dbReference type="GO" id="GO:0032874">
    <property type="term" value="P:positive regulation of stress-activated MAPK cascade"/>
    <property type="evidence" value="ECO:0007669"/>
    <property type="project" value="Ensembl"/>
</dbReference>
<dbReference type="GO" id="GO:0072659">
    <property type="term" value="P:protein localization to plasma membrane"/>
    <property type="evidence" value="ECO:0007669"/>
    <property type="project" value="Ensembl"/>
</dbReference>
<dbReference type="GO" id="GO:0015031">
    <property type="term" value="P:protein transport"/>
    <property type="evidence" value="ECO:0007669"/>
    <property type="project" value="Ensembl"/>
</dbReference>
<dbReference type="InterPro" id="IPR004895">
    <property type="entry name" value="Prenylated_rab_accept_PRA1"/>
</dbReference>
<dbReference type="PANTHER" id="PTHR12859:SF2">
    <property type="entry name" value="PRA1 FAMILY PROTEIN 3"/>
    <property type="match status" value="1"/>
</dbReference>
<dbReference type="PANTHER" id="PTHR12859">
    <property type="entry name" value="PRA1 PROTEIN"/>
    <property type="match status" value="1"/>
</dbReference>
<dbReference type="Pfam" id="PF03208">
    <property type="entry name" value="PRA1"/>
    <property type="match status" value="1"/>
</dbReference>
<keyword id="KW-0007">Acetylation</keyword>
<keyword id="KW-1003">Cell membrane</keyword>
<keyword id="KW-0963">Cytoplasm</keyword>
<keyword id="KW-0206">Cytoskeleton</keyword>
<keyword id="KW-0256">Endoplasmic reticulum</keyword>
<keyword id="KW-0472">Membrane</keyword>
<keyword id="KW-1185">Reference proteome</keyword>
<keyword id="KW-0812">Transmembrane</keyword>
<keyword id="KW-1133">Transmembrane helix</keyword>
<protein>
    <recommendedName>
        <fullName>PRA1 family protein 3</fullName>
    </recommendedName>
    <alternativeName>
        <fullName>ADP-ribosylation factor-like protein 6-interacting protein 5</fullName>
        <shortName>ARL-6-interacting protein 5</shortName>
        <shortName>Aip-5</shortName>
    </alternativeName>
</protein>
<accession>Q5E9M1</accession>
<reference key="1">
    <citation type="journal article" date="2005" name="BMC Genomics">
        <title>Characterization of 954 bovine full-CDS cDNA sequences.</title>
        <authorList>
            <person name="Harhay G.P."/>
            <person name="Sonstegard T.S."/>
            <person name="Keele J.W."/>
            <person name="Heaton M.P."/>
            <person name="Clawson M.L."/>
            <person name="Snelling W.M."/>
            <person name="Wiedmann R.T."/>
            <person name="Van Tassell C.P."/>
            <person name="Smith T.P.L."/>
        </authorList>
    </citation>
    <scope>NUCLEOTIDE SEQUENCE [LARGE SCALE MRNA]</scope>
</reference>
<reference key="2">
    <citation type="submission" date="2005-08" db="EMBL/GenBank/DDBJ databases">
        <authorList>
            <consortium name="NIH - Mammalian Gene Collection (MGC) project"/>
        </authorList>
    </citation>
    <scope>NUCLEOTIDE SEQUENCE [LARGE SCALE MRNA]</scope>
    <source>
        <strain>Crossbred X Angus</strain>
        <tissue>Ileum</tissue>
    </source>
</reference>